<feature type="chain" id="PRO_1000216218" description="Cytochrome c-type biogenesis protein CcmE">
    <location>
        <begin position="1"/>
        <end position="128"/>
    </location>
</feature>
<feature type="topological domain" description="Cytoplasmic" evidence="1">
    <location>
        <begin position="1"/>
        <end position="8"/>
    </location>
</feature>
<feature type="transmembrane region" description="Helical; Signal-anchor for type II membrane protein" evidence="1">
    <location>
        <begin position="9"/>
        <end position="29"/>
    </location>
</feature>
<feature type="topological domain" description="Periplasmic" evidence="1">
    <location>
        <begin position="30"/>
        <end position="128"/>
    </location>
</feature>
<feature type="binding site" description="covalent" evidence="1">
    <location>
        <position position="120"/>
    </location>
    <ligand>
        <name>heme</name>
        <dbReference type="ChEBI" id="CHEBI:30413"/>
    </ligand>
</feature>
<feature type="binding site" description="axial binding residue" evidence="1">
    <location>
        <position position="124"/>
    </location>
    <ligand>
        <name>heme</name>
        <dbReference type="ChEBI" id="CHEBI:30413"/>
    </ligand>
    <ligandPart>
        <name>Fe</name>
        <dbReference type="ChEBI" id="CHEBI:18248"/>
    </ligandPart>
</feature>
<organism>
    <name type="scientific">Rickettsia peacockii (strain Rustic)</name>
    <dbReference type="NCBI Taxonomy" id="562019"/>
    <lineage>
        <taxon>Bacteria</taxon>
        <taxon>Pseudomonadati</taxon>
        <taxon>Pseudomonadota</taxon>
        <taxon>Alphaproteobacteria</taxon>
        <taxon>Rickettsiales</taxon>
        <taxon>Rickettsiaceae</taxon>
        <taxon>Rickettsieae</taxon>
        <taxon>Rickettsia</taxon>
        <taxon>spotted fever group</taxon>
    </lineage>
</organism>
<name>CCME_RICPU</name>
<protein>
    <recommendedName>
        <fullName evidence="1">Cytochrome c-type biogenesis protein CcmE</fullName>
    </recommendedName>
    <alternativeName>
        <fullName evidence="1">Cytochrome c maturation protein E</fullName>
    </alternativeName>
    <alternativeName>
        <fullName evidence="1">Heme chaperone CcmE</fullName>
    </alternativeName>
</protein>
<comment type="function">
    <text evidence="1">Heme chaperone required for the biogenesis of c-type cytochromes. Transiently binds heme delivered by CcmC and transfers the heme to apo-cytochromes in a process facilitated by CcmF and CcmH.</text>
</comment>
<comment type="subcellular location">
    <subcellularLocation>
        <location evidence="1">Cell inner membrane</location>
        <topology evidence="1">Single-pass type II membrane protein</topology>
        <orientation evidence="1">Periplasmic side</orientation>
    </subcellularLocation>
</comment>
<comment type="similarity">
    <text evidence="1">Belongs to the CcmE/CycJ family.</text>
</comment>
<evidence type="ECO:0000255" key="1">
    <source>
        <dbReference type="HAMAP-Rule" id="MF_01959"/>
    </source>
</evidence>
<gene>
    <name evidence="1" type="primary">ccmE</name>
    <name evidence="1" type="synonym">cycJ</name>
    <name type="ordered locus">RPR_03570</name>
</gene>
<keyword id="KW-0997">Cell inner membrane</keyword>
<keyword id="KW-1003">Cell membrane</keyword>
<keyword id="KW-0201">Cytochrome c-type biogenesis</keyword>
<keyword id="KW-0349">Heme</keyword>
<keyword id="KW-0408">Iron</keyword>
<keyword id="KW-0472">Membrane</keyword>
<keyword id="KW-0479">Metal-binding</keyword>
<keyword id="KW-0735">Signal-anchor</keyword>
<keyword id="KW-0812">Transmembrane</keyword>
<keyword id="KW-1133">Transmembrane helix</keyword>
<proteinExistence type="inferred from homology"/>
<accession>C4K1K2</accession>
<sequence>MQKRVRNRLITIIICFCSACLGISIILYNLEKNIVFFLPPSKINAIEQGKELRVGGLVKTDSINKIADDKISFVITDNIKDFEILYQGALPALFRKGQGIIAIGQLSNGKFIARQLLAKHDENYRPPQ</sequence>
<dbReference type="EMBL" id="CP001227">
    <property type="protein sequence ID" value="ACR47453.1"/>
    <property type="molecule type" value="Genomic_DNA"/>
</dbReference>
<dbReference type="RefSeq" id="WP_012736693.1">
    <property type="nucleotide sequence ID" value="NC_012730.1"/>
</dbReference>
<dbReference type="SMR" id="C4K1K2"/>
<dbReference type="KEGG" id="rpk:RPR_03570"/>
<dbReference type="HOGENOM" id="CLU_079503_1_1_5"/>
<dbReference type="Proteomes" id="UP000005015">
    <property type="component" value="Chromosome"/>
</dbReference>
<dbReference type="GO" id="GO:0005886">
    <property type="term" value="C:plasma membrane"/>
    <property type="evidence" value="ECO:0007669"/>
    <property type="project" value="UniProtKB-SubCell"/>
</dbReference>
<dbReference type="GO" id="GO:0020037">
    <property type="term" value="F:heme binding"/>
    <property type="evidence" value="ECO:0007669"/>
    <property type="project" value="InterPro"/>
</dbReference>
<dbReference type="GO" id="GO:0046872">
    <property type="term" value="F:metal ion binding"/>
    <property type="evidence" value="ECO:0007669"/>
    <property type="project" value="UniProtKB-KW"/>
</dbReference>
<dbReference type="GO" id="GO:0017004">
    <property type="term" value="P:cytochrome complex assembly"/>
    <property type="evidence" value="ECO:0007669"/>
    <property type="project" value="UniProtKB-KW"/>
</dbReference>
<dbReference type="Gene3D" id="2.40.50.140">
    <property type="entry name" value="Nucleic acid-binding proteins"/>
    <property type="match status" value="1"/>
</dbReference>
<dbReference type="HAMAP" id="MF_01959">
    <property type="entry name" value="CcmE"/>
    <property type="match status" value="1"/>
</dbReference>
<dbReference type="InterPro" id="IPR004329">
    <property type="entry name" value="CcmE"/>
</dbReference>
<dbReference type="InterPro" id="IPR036127">
    <property type="entry name" value="CcmE-like_sf"/>
</dbReference>
<dbReference type="InterPro" id="IPR012340">
    <property type="entry name" value="NA-bd_OB-fold"/>
</dbReference>
<dbReference type="NCBIfam" id="NF009727">
    <property type="entry name" value="PRK13254.1-1"/>
    <property type="match status" value="1"/>
</dbReference>
<dbReference type="PANTHER" id="PTHR34128">
    <property type="entry name" value="CYTOCHROME C-TYPE BIOGENESIS PROTEIN CCME HOMOLOG, MITOCHONDRIAL"/>
    <property type="match status" value="1"/>
</dbReference>
<dbReference type="PANTHER" id="PTHR34128:SF2">
    <property type="entry name" value="CYTOCHROME C-TYPE BIOGENESIS PROTEIN CCME HOMOLOG, MITOCHONDRIAL"/>
    <property type="match status" value="1"/>
</dbReference>
<dbReference type="Pfam" id="PF03100">
    <property type="entry name" value="CcmE"/>
    <property type="match status" value="1"/>
</dbReference>
<dbReference type="SUPFAM" id="SSF82093">
    <property type="entry name" value="Heme chaperone CcmE"/>
    <property type="match status" value="1"/>
</dbReference>
<reference key="1">
    <citation type="journal article" date="2009" name="PLoS ONE">
        <title>Genome sequence of the endosymbiont Rickettsia peacockii and comparison with virulent Rickettsia rickettsii: identification of virulence factors.</title>
        <authorList>
            <person name="Felsheim R.F."/>
            <person name="Kurtti T.J."/>
            <person name="Munderloh U.G."/>
        </authorList>
    </citation>
    <scope>NUCLEOTIDE SEQUENCE [LARGE SCALE GENOMIC DNA]</scope>
    <source>
        <strain>Rustic</strain>
    </source>
</reference>